<dbReference type="EC" id="6.3.2.8" evidence="1"/>
<dbReference type="EMBL" id="AP008229">
    <property type="protein sequence ID" value="BAE70358.1"/>
    <property type="molecule type" value="Genomic_DNA"/>
</dbReference>
<dbReference type="RefSeq" id="WP_011409375.1">
    <property type="nucleotide sequence ID" value="NC_007705.1"/>
</dbReference>
<dbReference type="SMR" id="Q2NZB9"/>
<dbReference type="KEGG" id="xom:XOO3603"/>
<dbReference type="HOGENOM" id="CLU_028104_2_2_6"/>
<dbReference type="UniPathway" id="UPA00219"/>
<dbReference type="GO" id="GO:0005737">
    <property type="term" value="C:cytoplasm"/>
    <property type="evidence" value="ECO:0007669"/>
    <property type="project" value="UniProtKB-SubCell"/>
</dbReference>
<dbReference type="GO" id="GO:0005524">
    <property type="term" value="F:ATP binding"/>
    <property type="evidence" value="ECO:0007669"/>
    <property type="project" value="UniProtKB-UniRule"/>
</dbReference>
<dbReference type="GO" id="GO:0008763">
    <property type="term" value="F:UDP-N-acetylmuramate-L-alanine ligase activity"/>
    <property type="evidence" value="ECO:0007669"/>
    <property type="project" value="UniProtKB-UniRule"/>
</dbReference>
<dbReference type="GO" id="GO:0051301">
    <property type="term" value="P:cell division"/>
    <property type="evidence" value="ECO:0007669"/>
    <property type="project" value="UniProtKB-KW"/>
</dbReference>
<dbReference type="GO" id="GO:0071555">
    <property type="term" value="P:cell wall organization"/>
    <property type="evidence" value="ECO:0007669"/>
    <property type="project" value="UniProtKB-KW"/>
</dbReference>
<dbReference type="GO" id="GO:0009252">
    <property type="term" value="P:peptidoglycan biosynthetic process"/>
    <property type="evidence" value="ECO:0007669"/>
    <property type="project" value="UniProtKB-UniRule"/>
</dbReference>
<dbReference type="GO" id="GO:0008360">
    <property type="term" value="P:regulation of cell shape"/>
    <property type="evidence" value="ECO:0007669"/>
    <property type="project" value="UniProtKB-KW"/>
</dbReference>
<dbReference type="Gene3D" id="3.90.190.20">
    <property type="entry name" value="Mur ligase, C-terminal domain"/>
    <property type="match status" value="1"/>
</dbReference>
<dbReference type="Gene3D" id="3.40.1190.10">
    <property type="entry name" value="Mur-like, catalytic domain"/>
    <property type="match status" value="1"/>
</dbReference>
<dbReference type="Gene3D" id="3.40.50.720">
    <property type="entry name" value="NAD(P)-binding Rossmann-like Domain"/>
    <property type="match status" value="1"/>
</dbReference>
<dbReference type="HAMAP" id="MF_00046">
    <property type="entry name" value="MurC"/>
    <property type="match status" value="1"/>
</dbReference>
<dbReference type="InterPro" id="IPR036565">
    <property type="entry name" value="Mur-like_cat_sf"/>
</dbReference>
<dbReference type="InterPro" id="IPR004101">
    <property type="entry name" value="Mur_ligase_C"/>
</dbReference>
<dbReference type="InterPro" id="IPR036615">
    <property type="entry name" value="Mur_ligase_C_dom_sf"/>
</dbReference>
<dbReference type="InterPro" id="IPR013221">
    <property type="entry name" value="Mur_ligase_cen"/>
</dbReference>
<dbReference type="InterPro" id="IPR000713">
    <property type="entry name" value="Mur_ligase_N"/>
</dbReference>
<dbReference type="InterPro" id="IPR050061">
    <property type="entry name" value="MurCDEF_pg_biosynth"/>
</dbReference>
<dbReference type="InterPro" id="IPR005758">
    <property type="entry name" value="UDP-N-AcMur_Ala_ligase_MurC"/>
</dbReference>
<dbReference type="NCBIfam" id="TIGR01082">
    <property type="entry name" value="murC"/>
    <property type="match status" value="1"/>
</dbReference>
<dbReference type="PANTHER" id="PTHR43445:SF3">
    <property type="entry name" value="UDP-N-ACETYLMURAMATE--L-ALANINE LIGASE"/>
    <property type="match status" value="1"/>
</dbReference>
<dbReference type="PANTHER" id="PTHR43445">
    <property type="entry name" value="UDP-N-ACETYLMURAMATE--L-ALANINE LIGASE-RELATED"/>
    <property type="match status" value="1"/>
</dbReference>
<dbReference type="Pfam" id="PF01225">
    <property type="entry name" value="Mur_ligase"/>
    <property type="match status" value="1"/>
</dbReference>
<dbReference type="Pfam" id="PF02875">
    <property type="entry name" value="Mur_ligase_C"/>
    <property type="match status" value="1"/>
</dbReference>
<dbReference type="Pfam" id="PF08245">
    <property type="entry name" value="Mur_ligase_M"/>
    <property type="match status" value="1"/>
</dbReference>
<dbReference type="SUPFAM" id="SSF51984">
    <property type="entry name" value="MurCD N-terminal domain"/>
    <property type="match status" value="1"/>
</dbReference>
<dbReference type="SUPFAM" id="SSF53623">
    <property type="entry name" value="MurD-like peptide ligases, catalytic domain"/>
    <property type="match status" value="1"/>
</dbReference>
<dbReference type="SUPFAM" id="SSF53244">
    <property type="entry name" value="MurD-like peptide ligases, peptide-binding domain"/>
    <property type="match status" value="1"/>
</dbReference>
<protein>
    <recommendedName>
        <fullName evidence="1">UDP-N-acetylmuramate--L-alanine ligase</fullName>
        <ecNumber evidence="1">6.3.2.8</ecNumber>
    </recommendedName>
    <alternativeName>
        <fullName evidence="1">UDP-N-acetylmuramoyl-L-alanine synthetase</fullName>
    </alternativeName>
</protein>
<reference key="1">
    <citation type="journal article" date="2005" name="Jpn. Agric. Res. Q.">
        <title>Genome sequence of Xanthomonas oryzae pv. oryzae suggests contribution of large numbers of effector genes and insertion sequences to its race diversity.</title>
        <authorList>
            <person name="Ochiai H."/>
            <person name="Inoue Y."/>
            <person name="Takeya M."/>
            <person name="Sasaki A."/>
            <person name="Kaku H."/>
        </authorList>
    </citation>
    <scope>NUCLEOTIDE SEQUENCE [LARGE SCALE GENOMIC DNA]</scope>
    <source>
        <strain>MAFF 311018</strain>
    </source>
</reference>
<keyword id="KW-0067">ATP-binding</keyword>
<keyword id="KW-0131">Cell cycle</keyword>
<keyword id="KW-0132">Cell division</keyword>
<keyword id="KW-0133">Cell shape</keyword>
<keyword id="KW-0961">Cell wall biogenesis/degradation</keyword>
<keyword id="KW-0963">Cytoplasm</keyword>
<keyword id="KW-0436">Ligase</keyword>
<keyword id="KW-0547">Nucleotide-binding</keyword>
<keyword id="KW-0573">Peptidoglycan synthesis</keyword>
<gene>
    <name evidence="1" type="primary">murC</name>
    <name type="ordered locus">XOO3603</name>
</gene>
<sequence>MIRRLQDSGDLVRAFPRVHFVGIGGTGMSGIAEVMLTLGYEVSGSDNSDNVATRRLAKLGARVMRGHSAANVLGTDCVVVSSAIRDDNPELMEARSQRIPIMPRAAMLAELMRFRRGIAVAGTHGKTTTTSLAAAVLSEGGLDPTFVIGGQLLAAGANAKLGGGQWLVAEADESDGSFLRLNPLMAVITNIDADHLENYGNDFARIQAAFAEFLQRLPFYGLSLLCIDDPEVAALAGRTPRHVMSYGMSENADVRAEDVVQDGPRMRFTLRLPEGTTTPVTLALPGRHNVLNALAAAAIGWQLGVAPGTIARALENFAGIGRRFNDLGEVTTSTGARVRVVDDYGHHPRELEAVFAAARGGWPDKRLVVAFQPHRYSRTRDQFDAFAAVLSTVDALVLSEVYPAGEAPIPGADSRALARAIRARGRSEPVVVGQIASLAEVLPDVLQDGDLLLMMGAGDIGYVAQHIINNGFVGEPA</sequence>
<feature type="chain" id="PRO_0000242619" description="UDP-N-acetylmuramate--L-alanine ligase">
    <location>
        <begin position="1"/>
        <end position="477"/>
    </location>
</feature>
<feature type="binding site" evidence="1">
    <location>
        <begin position="122"/>
        <end position="128"/>
    </location>
    <ligand>
        <name>ATP</name>
        <dbReference type="ChEBI" id="CHEBI:30616"/>
    </ligand>
</feature>
<accession>Q2NZB9</accession>
<name>MURC_XANOM</name>
<comment type="function">
    <text evidence="1">Cell wall formation.</text>
</comment>
<comment type="catalytic activity">
    <reaction evidence="1">
        <text>UDP-N-acetyl-alpha-D-muramate + L-alanine + ATP = UDP-N-acetyl-alpha-D-muramoyl-L-alanine + ADP + phosphate + H(+)</text>
        <dbReference type="Rhea" id="RHEA:23372"/>
        <dbReference type="ChEBI" id="CHEBI:15378"/>
        <dbReference type="ChEBI" id="CHEBI:30616"/>
        <dbReference type="ChEBI" id="CHEBI:43474"/>
        <dbReference type="ChEBI" id="CHEBI:57972"/>
        <dbReference type="ChEBI" id="CHEBI:70757"/>
        <dbReference type="ChEBI" id="CHEBI:83898"/>
        <dbReference type="ChEBI" id="CHEBI:456216"/>
        <dbReference type="EC" id="6.3.2.8"/>
    </reaction>
</comment>
<comment type="pathway">
    <text evidence="1">Cell wall biogenesis; peptidoglycan biosynthesis.</text>
</comment>
<comment type="subcellular location">
    <subcellularLocation>
        <location evidence="1">Cytoplasm</location>
    </subcellularLocation>
</comment>
<comment type="similarity">
    <text evidence="1">Belongs to the MurCDEF family.</text>
</comment>
<proteinExistence type="inferred from homology"/>
<organism>
    <name type="scientific">Xanthomonas oryzae pv. oryzae (strain MAFF 311018)</name>
    <dbReference type="NCBI Taxonomy" id="342109"/>
    <lineage>
        <taxon>Bacteria</taxon>
        <taxon>Pseudomonadati</taxon>
        <taxon>Pseudomonadota</taxon>
        <taxon>Gammaproteobacteria</taxon>
        <taxon>Lysobacterales</taxon>
        <taxon>Lysobacteraceae</taxon>
        <taxon>Xanthomonas</taxon>
    </lineage>
</organism>
<evidence type="ECO:0000255" key="1">
    <source>
        <dbReference type="HAMAP-Rule" id="MF_00046"/>
    </source>
</evidence>